<reference key="1">
    <citation type="journal article" date="2001" name="Genomics">
        <title>Identification of a CD20-, Fc-epsilon-RI-beta-, and HTm4-related gene family: sixteen new MS4A family members expressed in human and mouse.</title>
        <authorList>
            <person name="Liang Y."/>
            <person name="Tedder T.F."/>
        </authorList>
    </citation>
    <scope>NUCLEOTIDE SEQUENCE [MRNA] (ISOFORM 1)</scope>
    <source>
        <tissue>Fetus</tissue>
    </source>
</reference>
<reference key="2">
    <citation type="journal article" date="2005" name="Science">
        <title>The transcriptional landscape of the mammalian genome.</title>
        <authorList>
            <person name="Carninci P."/>
            <person name="Kasukawa T."/>
            <person name="Katayama S."/>
            <person name="Gough J."/>
            <person name="Frith M.C."/>
            <person name="Maeda N."/>
            <person name="Oyama R."/>
            <person name="Ravasi T."/>
            <person name="Lenhard B."/>
            <person name="Wells C."/>
            <person name="Kodzius R."/>
            <person name="Shimokawa K."/>
            <person name="Bajic V.B."/>
            <person name="Brenner S.E."/>
            <person name="Batalov S."/>
            <person name="Forrest A.R."/>
            <person name="Zavolan M."/>
            <person name="Davis M.J."/>
            <person name="Wilming L.G."/>
            <person name="Aidinis V."/>
            <person name="Allen J.E."/>
            <person name="Ambesi-Impiombato A."/>
            <person name="Apweiler R."/>
            <person name="Aturaliya R.N."/>
            <person name="Bailey T.L."/>
            <person name="Bansal M."/>
            <person name="Baxter L."/>
            <person name="Beisel K.W."/>
            <person name="Bersano T."/>
            <person name="Bono H."/>
            <person name="Chalk A.M."/>
            <person name="Chiu K.P."/>
            <person name="Choudhary V."/>
            <person name="Christoffels A."/>
            <person name="Clutterbuck D.R."/>
            <person name="Crowe M.L."/>
            <person name="Dalla E."/>
            <person name="Dalrymple B.P."/>
            <person name="de Bono B."/>
            <person name="Della Gatta G."/>
            <person name="di Bernardo D."/>
            <person name="Down T."/>
            <person name="Engstrom P."/>
            <person name="Fagiolini M."/>
            <person name="Faulkner G."/>
            <person name="Fletcher C.F."/>
            <person name="Fukushima T."/>
            <person name="Furuno M."/>
            <person name="Futaki S."/>
            <person name="Gariboldi M."/>
            <person name="Georgii-Hemming P."/>
            <person name="Gingeras T.R."/>
            <person name="Gojobori T."/>
            <person name="Green R.E."/>
            <person name="Gustincich S."/>
            <person name="Harbers M."/>
            <person name="Hayashi Y."/>
            <person name="Hensch T.K."/>
            <person name="Hirokawa N."/>
            <person name="Hill D."/>
            <person name="Huminiecki L."/>
            <person name="Iacono M."/>
            <person name="Ikeo K."/>
            <person name="Iwama A."/>
            <person name="Ishikawa T."/>
            <person name="Jakt M."/>
            <person name="Kanapin A."/>
            <person name="Katoh M."/>
            <person name="Kawasawa Y."/>
            <person name="Kelso J."/>
            <person name="Kitamura H."/>
            <person name="Kitano H."/>
            <person name="Kollias G."/>
            <person name="Krishnan S.P."/>
            <person name="Kruger A."/>
            <person name="Kummerfeld S.K."/>
            <person name="Kurochkin I.V."/>
            <person name="Lareau L.F."/>
            <person name="Lazarevic D."/>
            <person name="Lipovich L."/>
            <person name="Liu J."/>
            <person name="Liuni S."/>
            <person name="McWilliam S."/>
            <person name="Madan Babu M."/>
            <person name="Madera M."/>
            <person name="Marchionni L."/>
            <person name="Matsuda H."/>
            <person name="Matsuzawa S."/>
            <person name="Miki H."/>
            <person name="Mignone F."/>
            <person name="Miyake S."/>
            <person name="Morris K."/>
            <person name="Mottagui-Tabar S."/>
            <person name="Mulder N."/>
            <person name="Nakano N."/>
            <person name="Nakauchi H."/>
            <person name="Ng P."/>
            <person name="Nilsson R."/>
            <person name="Nishiguchi S."/>
            <person name="Nishikawa S."/>
            <person name="Nori F."/>
            <person name="Ohara O."/>
            <person name="Okazaki Y."/>
            <person name="Orlando V."/>
            <person name="Pang K.C."/>
            <person name="Pavan W.J."/>
            <person name="Pavesi G."/>
            <person name="Pesole G."/>
            <person name="Petrovsky N."/>
            <person name="Piazza S."/>
            <person name="Reed J."/>
            <person name="Reid J.F."/>
            <person name="Ring B.Z."/>
            <person name="Ringwald M."/>
            <person name="Rost B."/>
            <person name="Ruan Y."/>
            <person name="Salzberg S.L."/>
            <person name="Sandelin A."/>
            <person name="Schneider C."/>
            <person name="Schoenbach C."/>
            <person name="Sekiguchi K."/>
            <person name="Semple C.A."/>
            <person name="Seno S."/>
            <person name="Sessa L."/>
            <person name="Sheng Y."/>
            <person name="Shibata Y."/>
            <person name="Shimada H."/>
            <person name="Shimada K."/>
            <person name="Silva D."/>
            <person name="Sinclair B."/>
            <person name="Sperling S."/>
            <person name="Stupka E."/>
            <person name="Sugiura K."/>
            <person name="Sultana R."/>
            <person name="Takenaka Y."/>
            <person name="Taki K."/>
            <person name="Tammoja K."/>
            <person name="Tan S.L."/>
            <person name="Tang S."/>
            <person name="Taylor M.S."/>
            <person name="Tegner J."/>
            <person name="Teichmann S.A."/>
            <person name="Ueda H.R."/>
            <person name="van Nimwegen E."/>
            <person name="Verardo R."/>
            <person name="Wei C.L."/>
            <person name="Yagi K."/>
            <person name="Yamanishi H."/>
            <person name="Zabarovsky E."/>
            <person name="Zhu S."/>
            <person name="Zimmer A."/>
            <person name="Hide W."/>
            <person name="Bult C."/>
            <person name="Grimmond S.M."/>
            <person name="Teasdale R.D."/>
            <person name="Liu E.T."/>
            <person name="Brusic V."/>
            <person name="Quackenbush J."/>
            <person name="Wahlestedt C."/>
            <person name="Mattick J.S."/>
            <person name="Hume D.A."/>
            <person name="Kai C."/>
            <person name="Sasaki D."/>
            <person name="Tomaru Y."/>
            <person name="Fukuda S."/>
            <person name="Kanamori-Katayama M."/>
            <person name="Suzuki M."/>
            <person name="Aoki J."/>
            <person name="Arakawa T."/>
            <person name="Iida J."/>
            <person name="Imamura K."/>
            <person name="Itoh M."/>
            <person name="Kato T."/>
            <person name="Kawaji H."/>
            <person name="Kawagashira N."/>
            <person name="Kawashima T."/>
            <person name="Kojima M."/>
            <person name="Kondo S."/>
            <person name="Konno H."/>
            <person name="Nakano K."/>
            <person name="Ninomiya N."/>
            <person name="Nishio T."/>
            <person name="Okada M."/>
            <person name="Plessy C."/>
            <person name="Shibata K."/>
            <person name="Shiraki T."/>
            <person name="Suzuki S."/>
            <person name="Tagami M."/>
            <person name="Waki K."/>
            <person name="Watahiki A."/>
            <person name="Okamura-Oho Y."/>
            <person name="Suzuki H."/>
            <person name="Kawai J."/>
            <person name="Hayashizaki Y."/>
        </authorList>
    </citation>
    <scope>NUCLEOTIDE SEQUENCE [LARGE SCALE MRNA] (ISOFORMS 1 AND 2)</scope>
    <source>
        <strain>C57BL/6J</strain>
        <tissue>Bone marrow</tissue>
        <tissue>Stomach</tissue>
    </source>
</reference>
<sequence length="217" mass="23622">MIPQVVTNETITTISPNGINFPQKDESQPTQQRQDSLKKHLKAEIKVIVAIQIMCAVTVLALGIILASVPPVPYFNSVFSVLLKSGYPFIGALFFIASGILSIITERKSTKPLVDASLTLNILSVSFAFVGIIIISVSLAGLHPASEQCKQSKELSLIEHDYYQPFYNSDRSECAVTKSILTGALSVMLIISVLELGLALLSAMLWLREGVLTSLRM</sequence>
<name>M4A6C_MOUSE</name>
<evidence type="ECO:0000255" key="1"/>
<evidence type="ECO:0000256" key="2">
    <source>
        <dbReference type="SAM" id="MobiDB-lite"/>
    </source>
</evidence>
<evidence type="ECO:0000303" key="3">
    <source>
    </source>
</evidence>
<evidence type="ECO:0000305" key="4"/>
<keyword id="KW-0025">Alternative splicing</keyword>
<keyword id="KW-0472">Membrane</keyword>
<keyword id="KW-0675">Receptor</keyword>
<keyword id="KW-1185">Reference proteome</keyword>
<keyword id="KW-0812">Transmembrane</keyword>
<keyword id="KW-1133">Transmembrane helix</keyword>
<feature type="chain" id="PRO_0000158640" description="Membrane-spanning 4-domains subfamily A member 6C">
    <location>
        <begin position="1"/>
        <end position="217"/>
    </location>
</feature>
<feature type="topological domain" description="Cytoplasmic" evidence="1">
    <location>
        <begin position="1"/>
        <end position="46"/>
    </location>
</feature>
<feature type="transmembrane region" description="Helical" evidence="1">
    <location>
        <begin position="47"/>
        <end position="67"/>
    </location>
</feature>
<feature type="topological domain" description="Extracellular" evidence="1">
    <location>
        <begin position="68"/>
        <end position="84"/>
    </location>
</feature>
<feature type="transmembrane region" description="Helical" evidence="1">
    <location>
        <begin position="85"/>
        <end position="105"/>
    </location>
</feature>
<feature type="topological domain" description="Cytoplasmic" evidence="1">
    <location>
        <begin position="106"/>
        <end position="121"/>
    </location>
</feature>
<feature type="transmembrane region" description="Helical" evidence="1">
    <location>
        <begin position="122"/>
        <end position="142"/>
    </location>
</feature>
<feature type="topological domain" description="Extracellular" evidence="1">
    <location>
        <begin position="143"/>
        <end position="186"/>
    </location>
</feature>
<feature type="transmembrane region" description="Helical" evidence="1">
    <location>
        <begin position="187"/>
        <end position="207"/>
    </location>
</feature>
<feature type="topological domain" description="Cytoplasmic" evidence="1">
    <location>
        <begin position="208"/>
        <end position="217"/>
    </location>
</feature>
<feature type="region of interest" description="Disordered" evidence="2">
    <location>
        <begin position="1"/>
        <end position="33"/>
    </location>
</feature>
<feature type="compositionally biased region" description="Polar residues" evidence="2">
    <location>
        <begin position="1"/>
        <end position="20"/>
    </location>
</feature>
<feature type="splice variant" id="VSP_007385" description="In isoform 2." evidence="3">
    <original>FIASGILSIITERKSTKPLVDASLT</original>
    <variation>VSRLLGGIKWGKTEKGVFTQLHFCI</variation>
    <location>
        <begin position="95"/>
        <end position="119"/>
    </location>
</feature>
<feature type="splice variant" id="VSP_007386" description="In isoform 2." evidence="3">
    <location>
        <begin position="120"/>
        <end position="217"/>
    </location>
</feature>
<feature type="sequence conflict" description="In Ref. 2; BAB25808." evidence="4" ref="2">
    <original>T</original>
    <variation>K</variation>
    <location>
        <position position="13"/>
    </location>
</feature>
<feature type="sequence conflict" description="In Ref. 2; BAB25808." evidence="4" ref="2">
    <original>S</original>
    <variation>C</variation>
    <location>
        <position position="36"/>
    </location>
</feature>
<feature type="sequence conflict" description="In Ref. 2; BAB25808." evidence="4" ref="2">
    <original>H</original>
    <variation>L</variation>
    <location>
        <position position="40"/>
    </location>
</feature>
<feature type="sequence conflict" description="In Ref. 2; BAB25808." evidence="4" ref="2">
    <original>V</original>
    <variation>G</variation>
    <location>
        <position position="69"/>
    </location>
</feature>
<feature type="sequence conflict" description="In Ref. 2; BAB25808." evidence="4" ref="2">
    <original>P</original>
    <variation>L</variation>
    <location>
        <position position="112"/>
    </location>
</feature>
<feature type="sequence conflict" description="In Ref. 2; BAB25808." evidence="4" ref="2">
    <original>A</original>
    <variation>V</variation>
    <location>
        <position position="140"/>
    </location>
</feature>
<accession>Q99N08</accession>
<accession>Q3U8E1</accession>
<accession>Q8BVZ4</accession>
<accession>Q9D7Z9</accession>
<protein>
    <recommendedName>
        <fullName>Membrane-spanning 4-domains subfamily A member 6C</fullName>
    </recommendedName>
</protein>
<proteinExistence type="evidence at transcript level"/>
<comment type="function">
    <text>May be involved in signal transduction as a component of a multimeric receptor complex.</text>
</comment>
<comment type="subcellular location">
    <subcellularLocation>
        <location>Membrane</location>
        <topology>Multi-pass membrane protein</topology>
    </subcellularLocation>
</comment>
<comment type="alternative products">
    <event type="alternative splicing"/>
    <isoform>
        <id>Q99N08-1</id>
        <name>1</name>
        <sequence type="displayed"/>
    </isoform>
    <isoform>
        <id>Q99N08-2</id>
        <name>2</name>
        <sequence type="described" ref="VSP_007385 VSP_007386"/>
    </isoform>
</comment>
<comment type="tissue specificity">
    <text>Expressed only by thymus, spleen, peripheral lymph node and bone marrow.</text>
</comment>
<comment type="similarity">
    <text evidence="4">Belongs to the MS4A family.</text>
</comment>
<gene>
    <name type="primary">Ms4a6c</name>
</gene>
<dbReference type="EMBL" id="AF237910">
    <property type="protein sequence ID" value="AAK37419.1"/>
    <property type="molecule type" value="mRNA"/>
</dbReference>
<dbReference type="EMBL" id="AK008652">
    <property type="protein sequence ID" value="BAB25808.1"/>
    <property type="molecule type" value="mRNA"/>
</dbReference>
<dbReference type="EMBL" id="AK075852">
    <property type="protein sequence ID" value="BAC36004.1"/>
    <property type="molecule type" value="mRNA"/>
</dbReference>
<dbReference type="EMBL" id="AK150397">
    <property type="protein sequence ID" value="BAE29524.1"/>
    <property type="molecule type" value="mRNA"/>
</dbReference>
<dbReference type="EMBL" id="AK152258">
    <property type="protein sequence ID" value="BAE31077.1"/>
    <property type="molecule type" value="mRNA"/>
</dbReference>
<dbReference type="CCDS" id="CCDS50395.1">
    <molecule id="Q99N08-1"/>
</dbReference>
<dbReference type="RefSeq" id="NP_001159848.1">
    <property type="nucleotide sequence ID" value="NM_001166376.1"/>
</dbReference>
<dbReference type="RefSeq" id="NP_082871.2">
    <molecule id="Q99N08-1"/>
    <property type="nucleotide sequence ID" value="NM_028595.4"/>
</dbReference>
<dbReference type="SMR" id="Q99N08"/>
<dbReference type="FunCoup" id="Q99N08">
    <property type="interactions" value="68"/>
</dbReference>
<dbReference type="STRING" id="10090.ENSMUSP00000132425"/>
<dbReference type="PaxDb" id="10090-ENSMUSP00000132425"/>
<dbReference type="ProteomicsDB" id="295756">
    <molecule id="Q99N08-1"/>
</dbReference>
<dbReference type="ProteomicsDB" id="295757">
    <molecule id="Q99N08-2"/>
</dbReference>
<dbReference type="DNASU" id="73656"/>
<dbReference type="Ensembl" id="ENSMUST00000165310.3">
    <molecule id="Q99N08-1"/>
    <property type="protein sequence ID" value="ENSMUSP00000132425.2"/>
    <property type="gene ID" value="ENSMUSG00000079419.5"/>
</dbReference>
<dbReference type="GeneID" id="73656"/>
<dbReference type="KEGG" id="mmu:73656"/>
<dbReference type="UCSC" id="uc008gsh.2">
    <molecule id="Q99N08-1"/>
    <property type="organism name" value="mouse"/>
</dbReference>
<dbReference type="AGR" id="MGI:2385644"/>
<dbReference type="CTD" id="73656"/>
<dbReference type="MGI" id="MGI:2385644">
    <property type="gene designation" value="Ms4a6c"/>
</dbReference>
<dbReference type="VEuPathDB" id="HostDB:ENSMUSG00000079419"/>
<dbReference type="eggNOG" id="ENOG502SUQB">
    <property type="taxonomic scope" value="Eukaryota"/>
</dbReference>
<dbReference type="GeneTree" id="ENSGT00940000162688"/>
<dbReference type="HOGENOM" id="CLU_089673_1_0_1"/>
<dbReference type="InParanoid" id="Q99N08"/>
<dbReference type="OMA" id="NNEPSME"/>
<dbReference type="OrthoDB" id="10071849at2759"/>
<dbReference type="PhylomeDB" id="Q99N08"/>
<dbReference type="TreeFam" id="TF335157"/>
<dbReference type="BioGRID-ORCS" id="73656">
    <property type="hits" value="3 hits in 76 CRISPR screens"/>
</dbReference>
<dbReference type="ChiTaRS" id="Ms4a6c">
    <property type="organism name" value="mouse"/>
</dbReference>
<dbReference type="PRO" id="PR:Q99N08"/>
<dbReference type="Proteomes" id="UP000000589">
    <property type="component" value="Chromosome 19"/>
</dbReference>
<dbReference type="RNAct" id="Q99N08">
    <property type="molecule type" value="protein"/>
</dbReference>
<dbReference type="Bgee" id="ENSMUSG00000079419">
    <property type="expression patterns" value="Expressed in stroma of bone marrow and 122 other cell types or tissues"/>
</dbReference>
<dbReference type="GO" id="GO:0016020">
    <property type="term" value="C:membrane"/>
    <property type="evidence" value="ECO:0007669"/>
    <property type="project" value="UniProtKB-SubCell"/>
</dbReference>
<dbReference type="InterPro" id="IPR007237">
    <property type="entry name" value="CD20-like"/>
</dbReference>
<dbReference type="InterPro" id="IPR030417">
    <property type="entry name" value="MS4A"/>
</dbReference>
<dbReference type="PANTHER" id="PTHR23320:SF150">
    <property type="entry name" value="MEMBRANE-SPANNING 4-DOMAINS SUBFAMILY A MEMBER 6B-RELATED"/>
    <property type="match status" value="1"/>
</dbReference>
<dbReference type="PANTHER" id="PTHR23320">
    <property type="entry name" value="MEMBRANE-SPANNING 4-DOMAINS SUBFAMILY A MS4A -RELATED"/>
    <property type="match status" value="1"/>
</dbReference>
<dbReference type="Pfam" id="PF04103">
    <property type="entry name" value="CD20"/>
    <property type="match status" value="1"/>
</dbReference>
<organism>
    <name type="scientific">Mus musculus</name>
    <name type="common">Mouse</name>
    <dbReference type="NCBI Taxonomy" id="10090"/>
    <lineage>
        <taxon>Eukaryota</taxon>
        <taxon>Metazoa</taxon>
        <taxon>Chordata</taxon>
        <taxon>Craniata</taxon>
        <taxon>Vertebrata</taxon>
        <taxon>Euteleostomi</taxon>
        <taxon>Mammalia</taxon>
        <taxon>Eutheria</taxon>
        <taxon>Euarchontoglires</taxon>
        <taxon>Glires</taxon>
        <taxon>Rodentia</taxon>
        <taxon>Myomorpha</taxon>
        <taxon>Muroidea</taxon>
        <taxon>Muridae</taxon>
        <taxon>Murinae</taxon>
        <taxon>Mus</taxon>
        <taxon>Mus</taxon>
    </lineage>
</organism>